<name>PHYA_NOSS1</name>
<accession>Q9LCC2</accession>
<reference key="1">
    <citation type="submission" date="1999-06" db="EMBL/GenBank/DDBJ databases">
        <title>aphA, a phytochrome-like gene from Anabaena sp. strain PCC 7120.</title>
        <authorList>
            <person name="Ohmori M."/>
            <person name="Kamiya A."/>
            <person name="Kasahara M."/>
        </authorList>
    </citation>
    <scope>NUCLEOTIDE SEQUENCE [GENOMIC DNA]</scope>
</reference>
<reference key="2">
    <citation type="journal article" date="2001" name="DNA Res.">
        <title>Complete genomic sequence of the filamentous nitrogen-fixing cyanobacterium Anabaena sp. strain PCC 7120.</title>
        <authorList>
            <person name="Kaneko T."/>
            <person name="Nakamura Y."/>
            <person name="Wolk C.P."/>
            <person name="Kuritz T."/>
            <person name="Sasamoto S."/>
            <person name="Watanabe A."/>
            <person name="Iriguchi M."/>
            <person name="Ishikawa A."/>
            <person name="Kawashima K."/>
            <person name="Kimura T."/>
            <person name="Kishida Y."/>
            <person name="Kohara M."/>
            <person name="Matsumoto M."/>
            <person name="Matsuno A."/>
            <person name="Muraki A."/>
            <person name="Nakazaki N."/>
            <person name="Shimpo S."/>
            <person name="Sugimoto M."/>
            <person name="Takazawa M."/>
            <person name="Yamada M."/>
            <person name="Yasuda M."/>
            <person name="Tabata S."/>
        </authorList>
    </citation>
    <scope>NUCLEOTIDE SEQUENCE [LARGE SCALE GENOMIC DNA]</scope>
    <source>
        <strain>PCC 7120 / SAG 25.82 / UTEX 2576</strain>
    </source>
</reference>
<gene>
    <name type="primary">aphA</name>
    <name type="ordered locus">alr3157</name>
</gene>
<keyword id="KW-0067">ATP-binding</keyword>
<keyword id="KW-0157">Chromophore</keyword>
<keyword id="KW-0418">Kinase</keyword>
<keyword id="KW-0547">Nucleotide-binding</keyword>
<keyword id="KW-0597">Phosphoprotein</keyword>
<keyword id="KW-0600">Photoreceptor protein</keyword>
<keyword id="KW-0675">Receptor</keyword>
<keyword id="KW-1185">Reference proteome</keyword>
<keyword id="KW-0716">Sensory transduction</keyword>
<keyword id="KW-0804">Transcription</keyword>
<keyword id="KW-0805">Transcription regulation</keyword>
<keyword id="KW-0808">Transferase</keyword>
<sequence length="765" mass="86930">MRIDVESQNINVTSLKEAPIHLSGQIQPHGVLLVLEEPGLKILQVSNNTWGILGINAENILQKKLEDLLDSFQIERIQSGLSSGNLEFINPTKIWIRKKGDDYAVFDAVFHRNTEGFLILELEPAITQENIPFLSFYHLAKASINQLQKTANLRDFCQIIVQEVRKVTDFDRVMLYKFDDDGHGSVIAEEKLDSLEPYLGLHYPESDIPKPARKLFISNSIRVIPNAQAQAIQMIPALNPVSDRPVDLTNSILRSAANCHLEYLHNMGVGASLTISLIKDNKLWGLIACHHLSAKYVSYELRKACEFLGRVIFAEISAREETEDYDYRMNLTHIQSLLVEYMSQEDNFVDGLIKHQPSLLDLTSAQGAAVCFGDHCTLIGETPKAEDLVFLVQWLKNNVEEEVFYTDSLPQVYPDAERYKNVASGLLAIPISQRNYVLWFRPEVIQTVNWGGDPNQPFEVNKLDGNVRLCPRKSFELWKETVRLTSLPWRYVEIRAALELRKAIVNIVLRQADELAQLAHDLERSNAELKKFAYVASHDLQEPLNQVANYVQLLEMRYQDQLDADANEFITFAVEGVSLMQTLIDDVLAYSKVDTQAIAFQLTEVEKALDKALGNLRQRIAETGANITHDPLPTVMAGSTQLMQLFQNLIANAIKFRSEEAPQIHIGAERLEDEWLFSVRDNGIGIDPQFSDRIFVIFQRLHTRDEYHGTGMGLAICKKIIECHRGRIWVESQLGEGATFYFTIPVGGRERERRNGRKTQNNLFS</sequence>
<evidence type="ECO:0000250" key="1"/>
<evidence type="ECO:0000255" key="2">
    <source>
        <dbReference type="PROSITE-ProRule" id="PRU00107"/>
    </source>
</evidence>
<evidence type="ECO:0000305" key="3"/>
<comment type="function">
    <text evidence="1">Photoreceptor which exists in two forms that are reversibly interconvertible by light: the R form that absorbs maximally in the red region of the spectrum and the FR form that absorbs maximally in the far-red region.</text>
</comment>
<comment type="catalytic activity">
    <reaction>
        <text>ATP + protein L-histidine = ADP + protein N-phospho-L-histidine.</text>
        <dbReference type="EC" id="2.7.13.3"/>
    </reaction>
</comment>
<comment type="PTM">
    <text evidence="1">Contains one covalently linked tetrapyrrole chromophore.</text>
</comment>
<comment type="similarity">
    <text evidence="3">In the N-terminal section; belongs to the phytochrome family.</text>
</comment>
<proteinExistence type="inferred from homology"/>
<feature type="chain" id="PRO_0000171997" description="Cyanobacterial phytochrome A">
    <location>
        <begin position="1"/>
        <end position="765"/>
    </location>
</feature>
<feature type="domain" description="GAF">
    <location>
        <begin position="152"/>
        <end position="320"/>
    </location>
</feature>
<feature type="domain" description="Histidine kinase" evidence="2">
    <location>
        <begin position="535"/>
        <end position="748"/>
    </location>
</feature>
<feature type="region of interest" description="Chromophore binding domain">
    <location>
        <begin position="20"/>
        <end position="510"/>
    </location>
</feature>
<feature type="binding site" description="covalent" evidence="1">
    <location>
        <position position="259"/>
    </location>
    <ligand>
        <name>a tetrapyrrole</name>
        <dbReference type="ChEBI" id="CHEBI:26932"/>
    </ligand>
</feature>
<feature type="modified residue" description="Phosphohistidine; by autocatalysis" evidence="2">
    <location>
        <position position="538"/>
    </location>
</feature>
<organism>
    <name type="scientific">Nostoc sp. (strain PCC 7120 / SAG 25.82 / UTEX 2576)</name>
    <dbReference type="NCBI Taxonomy" id="103690"/>
    <lineage>
        <taxon>Bacteria</taxon>
        <taxon>Bacillati</taxon>
        <taxon>Cyanobacteriota</taxon>
        <taxon>Cyanophyceae</taxon>
        <taxon>Nostocales</taxon>
        <taxon>Nostocaceae</taxon>
        <taxon>Nostoc</taxon>
    </lineage>
</organism>
<dbReference type="EC" id="2.7.13.3"/>
<dbReference type="EMBL" id="AB028873">
    <property type="protein sequence ID" value="BAA90662.1"/>
    <property type="molecule type" value="Genomic_DNA"/>
</dbReference>
<dbReference type="EMBL" id="BA000019">
    <property type="protein sequence ID" value="BAB74856.1"/>
    <property type="molecule type" value="Genomic_DNA"/>
</dbReference>
<dbReference type="PIR" id="AF2200">
    <property type="entry name" value="AF2200"/>
</dbReference>
<dbReference type="RefSeq" id="WP_010997308.1">
    <property type="nucleotide sequence ID" value="NZ_RSCN01000001.1"/>
</dbReference>
<dbReference type="SMR" id="Q9LCC2"/>
<dbReference type="STRING" id="103690.gene:10495194"/>
<dbReference type="KEGG" id="ana:alr3157"/>
<dbReference type="eggNOG" id="COG4251">
    <property type="taxonomic scope" value="Bacteria"/>
</dbReference>
<dbReference type="OrthoDB" id="9760752at2"/>
<dbReference type="BRENDA" id="2.7.13.3">
    <property type="organism ID" value="319"/>
</dbReference>
<dbReference type="Proteomes" id="UP000002483">
    <property type="component" value="Chromosome"/>
</dbReference>
<dbReference type="GO" id="GO:0005524">
    <property type="term" value="F:ATP binding"/>
    <property type="evidence" value="ECO:0007669"/>
    <property type="project" value="UniProtKB-KW"/>
</dbReference>
<dbReference type="GO" id="GO:0000155">
    <property type="term" value="F:phosphorelay sensor kinase activity"/>
    <property type="evidence" value="ECO:0007669"/>
    <property type="project" value="InterPro"/>
</dbReference>
<dbReference type="GO" id="GO:0009881">
    <property type="term" value="F:photoreceptor activity"/>
    <property type="evidence" value="ECO:0007669"/>
    <property type="project" value="UniProtKB-KW"/>
</dbReference>
<dbReference type="GO" id="GO:0009584">
    <property type="term" value="P:detection of visible light"/>
    <property type="evidence" value="ECO:0007669"/>
    <property type="project" value="InterPro"/>
</dbReference>
<dbReference type="GO" id="GO:0006355">
    <property type="term" value="P:regulation of DNA-templated transcription"/>
    <property type="evidence" value="ECO:0007669"/>
    <property type="project" value="InterPro"/>
</dbReference>
<dbReference type="CDD" id="cd16921">
    <property type="entry name" value="HATPase_FilI-like"/>
    <property type="match status" value="1"/>
</dbReference>
<dbReference type="CDD" id="cd00082">
    <property type="entry name" value="HisKA"/>
    <property type="match status" value="1"/>
</dbReference>
<dbReference type="FunFam" id="3.30.565.10:FF:000006">
    <property type="entry name" value="Sensor histidine kinase WalK"/>
    <property type="match status" value="1"/>
</dbReference>
<dbReference type="Gene3D" id="1.10.287.130">
    <property type="match status" value="1"/>
</dbReference>
<dbReference type="Gene3D" id="3.30.450.270">
    <property type="match status" value="1"/>
</dbReference>
<dbReference type="Gene3D" id="3.30.450.40">
    <property type="match status" value="1"/>
</dbReference>
<dbReference type="Gene3D" id="3.30.565.10">
    <property type="entry name" value="Histidine kinase-like ATPase, C-terminal domain"/>
    <property type="match status" value="1"/>
</dbReference>
<dbReference type="Gene3D" id="3.30.450.20">
    <property type="entry name" value="PAS domain"/>
    <property type="match status" value="1"/>
</dbReference>
<dbReference type="InterPro" id="IPR003018">
    <property type="entry name" value="GAF"/>
</dbReference>
<dbReference type="InterPro" id="IPR029016">
    <property type="entry name" value="GAF-like_dom_sf"/>
</dbReference>
<dbReference type="InterPro" id="IPR036890">
    <property type="entry name" value="HATPase_C_sf"/>
</dbReference>
<dbReference type="InterPro" id="IPR005467">
    <property type="entry name" value="His_kinase_dom"/>
</dbReference>
<dbReference type="InterPro" id="IPR003661">
    <property type="entry name" value="HisK_dim/P_dom"/>
</dbReference>
<dbReference type="InterPro" id="IPR036097">
    <property type="entry name" value="HisK_dim/P_sf"/>
</dbReference>
<dbReference type="InterPro" id="IPR035965">
    <property type="entry name" value="PAS-like_dom_sf"/>
</dbReference>
<dbReference type="InterPro" id="IPR013654">
    <property type="entry name" value="PAS_2"/>
</dbReference>
<dbReference type="InterPro" id="IPR016132">
    <property type="entry name" value="Phyto_chromo_attachment"/>
</dbReference>
<dbReference type="InterPro" id="IPR001294">
    <property type="entry name" value="Phytochrome"/>
</dbReference>
<dbReference type="InterPro" id="IPR013515">
    <property type="entry name" value="Phytochrome_cen-reg"/>
</dbReference>
<dbReference type="InterPro" id="IPR043150">
    <property type="entry name" value="Phytochrome_PHY_sf"/>
</dbReference>
<dbReference type="InterPro" id="IPR052162">
    <property type="entry name" value="Sensor_kinase/Photoreceptor"/>
</dbReference>
<dbReference type="PANTHER" id="PTHR43304:SF1">
    <property type="entry name" value="PAC DOMAIN-CONTAINING PROTEIN"/>
    <property type="match status" value="1"/>
</dbReference>
<dbReference type="PANTHER" id="PTHR43304">
    <property type="entry name" value="PHYTOCHROME-LIKE PROTEIN CPH1"/>
    <property type="match status" value="1"/>
</dbReference>
<dbReference type="Pfam" id="PF01590">
    <property type="entry name" value="GAF"/>
    <property type="match status" value="1"/>
</dbReference>
<dbReference type="Pfam" id="PF02518">
    <property type="entry name" value="HATPase_c"/>
    <property type="match status" value="1"/>
</dbReference>
<dbReference type="Pfam" id="PF00512">
    <property type="entry name" value="HisKA"/>
    <property type="match status" value="1"/>
</dbReference>
<dbReference type="Pfam" id="PF08446">
    <property type="entry name" value="PAS_2"/>
    <property type="match status" value="1"/>
</dbReference>
<dbReference type="Pfam" id="PF00360">
    <property type="entry name" value="PHY"/>
    <property type="match status" value="1"/>
</dbReference>
<dbReference type="PRINTS" id="PR01033">
    <property type="entry name" value="PHYTOCHROME"/>
</dbReference>
<dbReference type="SMART" id="SM00065">
    <property type="entry name" value="GAF"/>
    <property type="match status" value="1"/>
</dbReference>
<dbReference type="SMART" id="SM00387">
    <property type="entry name" value="HATPase_c"/>
    <property type="match status" value="1"/>
</dbReference>
<dbReference type="SMART" id="SM00388">
    <property type="entry name" value="HisKA"/>
    <property type="match status" value="1"/>
</dbReference>
<dbReference type="SUPFAM" id="SSF55874">
    <property type="entry name" value="ATPase domain of HSP90 chaperone/DNA topoisomerase II/histidine kinase"/>
    <property type="match status" value="1"/>
</dbReference>
<dbReference type="SUPFAM" id="SSF55781">
    <property type="entry name" value="GAF domain-like"/>
    <property type="match status" value="2"/>
</dbReference>
<dbReference type="SUPFAM" id="SSF47384">
    <property type="entry name" value="Homodimeric domain of signal transducing histidine kinase"/>
    <property type="match status" value="1"/>
</dbReference>
<dbReference type="SUPFAM" id="SSF55785">
    <property type="entry name" value="PYP-like sensor domain (PAS domain)"/>
    <property type="match status" value="1"/>
</dbReference>
<dbReference type="PROSITE" id="PS50109">
    <property type="entry name" value="HIS_KIN"/>
    <property type="match status" value="1"/>
</dbReference>
<dbReference type="PROSITE" id="PS50046">
    <property type="entry name" value="PHYTOCHROME_2"/>
    <property type="match status" value="1"/>
</dbReference>
<protein>
    <recommendedName>
        <fullName>Cyanobacterial phytochrome A</fullName>
        <ecNumber>2.7.13.3</ecNumber>
    </recommendedName>
</protein>